<accession>B8DB35</accession>
<feature type="chain" id="PRO_1000184028" description="Large ribosomal subunit protein bL17">
    <location>
        <begin position="1"/>
        <end position="135"/>
    </location>
</feature>
<organism>
    <name type="scientific">Listeria monocytogenes serotype 4a (strain HCC23)</name>
    <dbReference type="NCBI Taxonomy" id="552536"/>
    <lineage>
        <taxon>Bacteria</taxon>
        <taxon>Bacillati</taxon>
        <taxon>Bacillota</taxon>
        <taxon>Bacilli</taxon>
        <taxon>Bacillales</taxon>
        <taxon>Listeriaceae</taxon>
        <taxon>Listeria</taxon>
    </lineage>
</organism>
<evidence type="ECO:0000255" key="1">
    <source>
        <dbReference type="HAMAP-Rule" id="MF_01368"/>
    </source>
</evidence>
<evidence type="ECO:0000305" key="2"/>
<gene>
    <name evidence="1" type="primary">rplQ</name>
    <name type="ordered locus">LMHCC_2929</name>
</gene>
<reference key="1">
    <citation type="journal article" date="2011" name="J. Bacteriol.">
        <title>Genome sequence of lineage III Listeria monocytogenes strain HCC23.</title>
        <authorList>
            <person name="Steele C.L."/>
            <person name="Donaldson J.R."/>
            <person name="Paul D."/>
            <person name="Banes M.M."/>
            <person name="Arick T."/>
            <person name="Bridges S.M."/>
            <person name="Lawrence M.L."/>
        </authorList>
    </citation>
    <scope>NUCLEOTIDE SEQUENCE [LARGE SCALE GENOMIC DNA]</scope>
    <source>
        <strain>HCC23</strain>
    </source>
</reference>
<dbReference type="EMBL" id="CP001175">
    <property type="protein sequence ID" value="ACK41260.1"/>
    <property type="molecule type" value="Genomic_DNA"/>
</dbReference>
<dbReference type="RefSeq" id="WP_003723675.1">
    <property type="nucleotide sequence ID" value="NC_011660.1"/>
</dbReference>
<dbReference type="SMR" id="B8DB35"/>
<dbReference type="GeneID" id="93240486"/>
<dbReference type="KEGG" id="lmh:LMHCC_2929"/>
<dbReference type="HOGENOM" id="CLU_074407_2_2_9"/>
<dbReference type="GO" id="GO:0022625">
    <property type="term" value="C:cytosolic large ribosomal subunit"/>
    <property type="evidence" value="ECO:0007669"/>
    <property type="project" value="TreeGrafter"/>
</dbReference>
<dbReference type="GO" id="GO:0003735">
    <property type="term" value="F:structural constituent of ribosome"/>
    <property type="evidence" value="ECO:0007669"/>
    <property type="project" value="InterPro"/>
</dbReference>
<dbReference type="GO" id="GO:0006412">
    <property type="term" value="P:translation"/>
    <property type="evidence" value="ECO:0007669"/>
    <property type="project" value="UniProtKB-UniRule"/>
</dbReference>
<dbReference type="FunFam" id="3.90.1030.10:FF:000002">
    <property type="entry name" value="50S ribosomal protein L17"/>
    <property type="match status" value="1"/>
</dbReference>
<dbReference type="Gene3D" id="3.90.1030.10">
    <property type="entry name" value="Ribosomal protein L17"/>
    <property type="match status" value="1"/>
</dbReference>
<dbReference type="HAMAP" id="MF_01368">
    <property type="entry name" value="Ribosomal_bL17"/>
    <property type="match status" value="1"/>
</dbReference>
<dbReference type="InterPro" id="IPR000456">
    <property type="entry name" value="Ribosomal_bL17"/>
</dbReference>
<dbReference type="InterPro" id="IPR047859">
    <property type="entry name" value="Ribosomal_bL17_CS"/>
</dbReference>
<dbReference type="InterPro" id="IPR036373">
    <property type="entry name" value="Ribosomal_bL17_sf"/>
</dbReference>
<dbReference type="NCBIfam" id="TIGR00059">
    <property type="entry name" value="L17"/>
    <property type="match status" value="1"/>
</dbReference>
<dbReference type="PANTHER" id="PTHR14413:SF16">
    <property type="entry name" value="LARGE RIBOSOMAL SUBUNIT PROTEIN BL17M"/>
    <property type="match status" value="1"/>
</dbReference>
<dbReference type="PANTHER" id="PTHR14413">
    <property type="entry name" value="RIBOSOMAL PROTEIN L17"/>
    <property type="match status" value="1"/>
</dbReference>
<dbReference type="Pfam" id="PF01196">
    <property type="entry name" value="Ribosomal_L17"/>
    <property type="match status" value="1"/>
</dbReference>
<dbReference type="SUPFAM" id="SSF64263">
    <property type="entry name" value="Prokaryotic ribosomal protein L17"/>
    <property type="match status" value="1"/>
</dbReference>
<dbReference type="PROSITE" id="PS01167">
    <property type="entry name" value="RIBOSOMAL_L17"/>
    <property type="match status" value="1"/>
</dbReference>
<protein>
    <recommendedName>
        <fullName evidence="1">Large ribosomal subunit protein bL17</fullName>
    </recommendedName>
    <alternativeName>
        <fullName evidence="2">50S ribosomal protein L17</fullName>
    </alternativeName>
</protein>
<keyword id="KW-0687">Ribonucleoprotein</keyword>
<keyword id="KW-0689">Ribosomal protein</keyword>
<sequence length="135" mass="15215">MGYRKLGRTSSQRKALLRDLATDLIVFERIETTEARAKEIRKVVEKLITSGKKGDLHARRQAAAFIRHEVVEVVQVDAKGKDGSTVKKNRPVYALQKLFDDVAPRYAERQGGYTRILKKGPRRGDGAPMVIIELV</sequence>
<name>RL17_LISMH</name>
<comment type="subunit">
    <text evidence="1">Part of the 50S ribosomal subunit. Contacts protein L32.</text>
</comment>
<comment type="similarity">
    <text evidence="1">Belongs to the bacterial ribosomal protein bL17 family.</text>
</comment>
<proteinExistence type="inferred from homology"/>